<reference key="1">
    <citation type="journal article" date="2003" name="Proc. Natl. Acad. Sci. U.S.A.">
        <title>The complete genome sequence of Chromobacterium violaceum reveals remarkable and exploitable bacterial adaptability.</title>
        <authorList>
            <person name="Vasconcelos A.T.R."/>
            <person name="de Almeida D.F."/>
            <person name="Hungria M."/>
            <person name="Guimaraes C.T."/>
            <person name="Antonio R.V."/>
            <person name="Almeida F.C."/>
            <person name="de Almeida L.G.P."/>
            <person name="de Almeida R."/>
            <person name="Alves-Gomes J.A."/>
            <person name="Andrade E.M."/>
            <person name="Araripe J."/>
            <person name="de Araujo M.F.F."/>
            <person name="Astolfi-Filho S."/>
            <person name="Azevedo V."/>
            <person name="Baptista A.J."/>
            <person name="Bataus L.A.M."/>
            <person name="Batista J.S."/>
            <person name="Belo A."/>
            <person name="van den Berg C."/>
            <person name="Bogo M."/>
            <person name="Bonatto S."/>
            <person name="Bordignon J."/>
            <person name="Brigido M.M."/>
            <person name="Brito C.A."/>
            <person name="Brocchi M."/>
            <person name="Burity H.A."/>
            <person name="Camargo A.A."/>
            <person name="Cardoso D.D.P."/>
            <person name="Carneiro N.P."/>
            <person name="Carraro D.M."/>
            <person name="Carvalho C.M.B."/>
            <person name="Cascardo J.C.M."/>
            <person name="Cavada B.S."/>
            <person name="Chueire L.M.O."/>
            <person name="Creczynski-Pasa T.B."/>
            <person name="Cunha-Junior N.C."/>
            <person name="Fagundes N."/>
            <person name="Falcao C.L."/>
            <person name="Fantinatti F."/>
            <person name="Farias I.P."/>
            <person name="Felipe M.S.S."/>
            <person name="Ferrari L.P."/>
            <person name="Ferro J.A."/>
            <person name="Ferro M.I.T."/>
            <person name="Franco G.R."/>
            <person name="Freitas N.S.A."/>
            <person name="Furlan L.R."/>
            <person name="Gazzinelli R.T."/>
            <person name="Gomes E.A."/>
            <person name="Goncalves P.R."/>
            <person name="Grangeiro T.B."/>
            <person name="Grattapaglia D."/>
            <person name="Grisard E.C."/>
            <person name="Hanna E.S."/>
            <person name="Jardim S.N."/>
            <person name="Laurino J."/>
            <person name="Leoi L.C.T."/>
            <person name="Lima L.F.A."/>
            <person name="Loureiro M.F."/>
            <person name="Lyra M.C.C.P."/>
            <person name="Madeira H.M.F."/>
            <person name="Manfio G.P."/>
            <person name="Maranhao A.Q."/>
            <person name="Martins W.S."/>
            <person name="di Mauro S.M.Z."/>
            <person name="de Medeiros S.R.B."/>
            <person name="Meissner R.V."/>
            <person name="Moreira M.A.M."/>
            <person name="Nascimento F.F."/>
            <person name="Nicolas M.F."/>
            <person name="Oliveira J.G."/>
            <person name="Oliveira S.C."/>
            <person name="Paixao R.F.C."/>
            <person name="Parente J.A."/>
            <person name="Pedrosa F.O."/>
            <person name="Pena S.D.J."/>
            <person name="Pereira J.O."/>
            <person name="Pereira M."/>
            <person name="Pinto L.S.R.C."/>
            <person name="Pinto L.S."/>
            <person name="Porto J.I.R."/>
            <person name="Potrich D.P."/>
            <person name="Ramalho-Neto C.E."/>
            <person name="Reis A.M.M."/>
            <person name="Rigo L.U."/>
            <person name="Rondinelli E."/>
            <person name="Santos E.B.P."/>
            <person name="Santos F.R."/>
            <person name="Schneider M.P.C."/>
            <person name="Seuanez H.N."/>
            <person name="Silva A.M.R."/>
            <person name="da Silva A.L.C."/>
            <person name="Silva D.W."/>
            <person name="Silva R."/>
            <person name="Simoes I.C."/>
            <person name="Simon D."/>
            <person name="Soares C.M.A."/>
            <person name="Soares R.B.A."/>
            <person name="Souza E.M."/>
            <person name="Souza K.R.L."/>
            <person name="Souza R.C."/>
            <person name="Steffens M.B.R."/>
            <person name="Steindel M."/>
            <person name="Teixeira S.R."/>
            <person name="Urmenyi T."/>
            <person name="Vettore A."/>
            <person name="Wassem R."/>
            <person name="Zaha A."/>
            <person name="Simpson A.J.G."/>
        </authorList>
    </citation>
    <scope>NUCLEOTIDE SEQUENCE [LARGE SCALE GENOMIC DNA]</scope>
    <source>
        <strain>ATCC 12472 / DSM 30191 / JCM 1249 / CCUG 213 / NBRC 12614 / NCIMB 9131 / NCTC 9757 / MK</strain>
    </source>
</reference>
<proteinExistence type="inferred from homology"/>
<protein>
    <recommendedName>
        <fullName evidence="1">Holliday junction branch migration complex subunit RuvA</fullName>
    </recommendedName>
</protein>
<keyword id="KW-0963">Cytoplasm</keyword>
<keyword id="KW-0227">DNA damage</keyword>
<keyword id="KW-0233">DNA recombination</keyword>
<keyword id="KW-0234">DNA repair</keyword>
<keyword id="KW-0238">DNA-binding</keyword>
<keyword id="KW-1185">Reference proteome</keyword>
<feature type="chain" id="PRO_0000094620" description="Holliday junction branch migration complex subunit RuvA">
    <location>
        <begin position="1"/>
        <end position="197"/>
    </location>
</feature>
<feature type="region of interest" description="Domain I" evidence="1">
    <location>
        <begin position="1"/>
        <end position="64"/>
    </location>
</feature>
<feature type="region of interest" description="Domain II" evidence="1">
    <location>
        <begin position="65"/>
        <end position="143"/>
    </location>
</feature>
<feature type="region of interest" description="Flexible linker" evidence="1">
    <location>
        <begin position="143"/>
        <end position="147"/>
    </location>
</feature>
<feature type="region of interest" description="Domain III" evidence="1">
    <location>
        <begin position="148"/>
        <end position="197"/>
    </location>
</feature>
<gene>
    <name evidence="1" type="primary">ruvA</name>
    <name type="ordered locus">CV_4223</name>
</gene>
<accession>Q7NQB7</accession>
<comment type="function">
    <text evidence="1">The RuvA-RuvB-RuvC complex processes Holliday junction (HJ) DNA during genetic recombination and DNA repair, while the RuvA-RuvB complex plays an important role in the rescue of blocked DNA replication forks via replication fork reversal (RFR). RuvA specifically binds to HJ cruciform DNA, conferring on it an open structure. The RuvB hexamer acts as an ATP-dependent pump, pulling dsDNA into and through the RuvAB complex. HJ branch migration allows RuvC to scan DNA until it finds its consensus sequence, where it cleaves and resolves the cruciform DNA.</text>
</comment>
<comment type="subunit">
    <text evidence="1">Homotetramer. Forms an RuvA(8)-RuvB(12)-Holliday junction (HJ) complex. HJ DNA is sandwiched between 2 RuvA tetramers; dsDNA enters through RuvA and exits via RuvB. An RuvB hexamer assembles on each DNA strand where it exits the tetramer. Each RuvB hexamer is contacted by two RuvA subunits (via domain III) on 2 adjacent RuvB subunits; this complex drives branch migration. In the full resolvosome a probable DNA-RuvA(4)-RuvB(12)-RuvC(2) complex forms which resolves the HJ.</text>
</comment>
<comment type="subcellular location">
    <subcellularLocation>
        <location evidence="1">Cytoplasm</location>
    </subcellularLocation>
</comment>
<comment type="domain">
    <text evidence="1">Has three domains with a flexible linker between the domains II and III and assumes an 'L' shape. Domain III is highly mobile and contacts RuvB.</text>
</comment>
<comment type="similarity">
    <text evidence="1">Belongs to the RuvA family.</text>
</comment>
<evidence type="ECO:0000255" key="1">
    <source>
        <dbReference type="HAMAP-Rule" id="MF_00031"/>
    </source>
</evidence>
<sequence length="197" mass="20822">MIGRLSGKLIEKLPPQVVVDVNGVGYEVDVPMTTFYQLPALGQPCTLFTHLAVREDAHLLYGFASKEERQTFRQLIKVTGIGAKIALAILSGMTADELAIAVASEDIKRLSAVPGIGKKTAERLVLELRGKLATGGNLTVPGGLPFAATPDEKSDIVNALLALGYNEKEAAAATKSLPADVTVSEGVRLALKSLMKV</sequence>
<organism>
    <name type="scientific">Chromobacterium violaceum (strain ATCC 12472 / DSM 30191 / JCM 1249 / CCUG 213 / NBRC 12614 / NCIMB 9131 / NCTC 9757 / MK)</name>
    <dbReference type="NCBI Taxonomy" id="243365"/>
    <lineage>
        <taxon>Bacteria</taxon>
        <taxon>Pseudomonadati</taxon>
        <taxon>Pseudomonadota</taxon>
        <taxon>Betaproteobacteria</taxon>
        <taxon>Neisseriales</taxon>
        <taxon>Chromobacteriaceae</taxon>
        <taxon>Chromobacterium</taxon>
    </lineage>
</organism>
<name>RUVA_CHRVO</name>
<dbReference type="EMBL" id="AE016825">
    <property type="protein sequence ID" value="AAQ61883.1"/>
    <property type="molecule type" value="Genomic_DNA"/>
</dbReference>
<dbReference type="RefSeq" id="WP_011137769.1">
    <property type="nucleotide sequence ID" value="NC_005085.1"/>
</dbReference>
<dbReference type="SMR" id="Q7NQB7"/>
<dbReference type="STRING" id="243365.CV_4223"/>
<dbReference type="GeneID" id="66366299"/>
<dbReference type="KEGG" id="cvi:CV_4223"/>
<dbReference type="eggNOG" id="COG0632">
    <property type="taxonomic scope" value="Bacteria"/>
</dbReference>
<dbReference type="HOGENOM" id="CLU_087936_0_0_4"/>
<dbReference type="OrthoDB" id="5293449at2"/>
<dbReference type="Proteomes" id="UP000001424">
    <property type="component" value="Chromosome"/>
</dbReference>
<dbReference type="GO" id="GO:0005737">
    <property type="term" value="C:cytoplasm"/>
    <property type="evidence" value="ECO:0007669"/>
    <property type="project" value="UniProtKB-SubCell"/>
</dbReference>
<dbReference type="GO" id="GO:0009379">
    <property type="term" value="C:Holliday junction helicase complex"/>
    <property type="evidence" value="ECO:0007669"/>
    <property type="project" value="InterPro"/>
</dbReference>
<dbReference type="GO" id="GO:0048476">
    <property type="term" value="C:Holliday junction resolvase complex"/>
    <property type="evidence" value="ECO:0007669"/>
    <property type="project" value="UniProtKB-UniRule"/>
</dbReference>
<dbReference type="GO" id="GO:0005524">
    <property type="term" value="F:ATP binding"/>
    <property type="evidence" value="ECO:0007669"/>
    <property type="project" value="InterPro"/>
</dbReference>
<dbReference type="GO" id="GO:0000400">
    <property type="term" value="F:four-way junction DNA binding"/>
    <property type="evidence" value="ECO:0007669"/>
    <property type="project" value="UniProtKB-UniRule"/>
</dbReference>
<dbReference type="GO" id="GO:0009378">
    <property type="term" value="F:four-way junction helicase activity"/>
    <property type="evidence" value="ECO:0007669"/>
    <property type="project" value="InterPro"/>
</dbReference>
<dbReference type="GO" id="GO:0006310">
    <property type="term" value="P:DNA recombination"/>
    <property type="evidence" value="ECO:0007669"/>
    <property type="project" value="UniProtKB-UniRule"/>
</dbReference>
<dbReference type="GO" id="GO:0006281">
    <property type="term" value="P:DNA repair"/>
    <property type="evidence" value="ECO:0007669"/>
    <property type="project" value="UniProtKB-UniRule"/>
</dbReference>
<dbReference type="CDD" id="cd14332">
    <property type="entry name" value="UBA_RuvA_C"/>
    <property type="match status" value="1"/>
</dbReference>
<dbReference type="Gene3D" id="1.10.150.20">
    <property type="entry name" value="5' to 3' exonuclease, C-terminal subdomain"/>
    <property type="match status" value="1"/>
</dbReference>
<dbReference type="Gene3D" id="1.10.8.10">
    <property type="entry name" value="DNA helicase RuvA subunit, C-terminal domain"/>
    <property type="match status" value="1"/>
</dbReference>
<dbReference type="Gene3D" id="2.40.50.140">
    <property type="entry name" value="Nucleic acid-binding proteins"/>
    <property type="match status" value="1"/>
</dbReference>
<dbReference type="HAMAP" id="MF_00031">
    <property type="entry name" value="DNA_HJ_migration_RuvA"/>
    <property type="match status" value="1"/>
</dbReference>
<dbReference type="InterPro" id="IPR013849">
    <property type="entry name" value="DNA_helicase_Holl-junc_RuvA_I"/>
</dbReference>
<dbReference type="InterPro" id="IPR003583">
    <property type="entry name" value="Hlx-hairpin-Hlx_DNA-bd_motif"/>
</dbReference>
<dbReference type="InterPro" id="IPR012340">
    <property type="entry name" value="NA-bd_OB-fold"/>
</dbReference>
<dbReference type="InterPro" id="IPR000085">
    <property type="entry name" value="RuvA"/>
</dbReference>
<dbReference type="InterPro" id="IPR010994">
    <property type="entry name" value="RuvA_2-like"/>
</dbReference>
<dbReference type="InterPro" id="IPR011114">
    <property type="entry name" value="RuvA_C"/>
</dbReference>
<dbReference type="InterPro" id="IPR036267">
    <property type="entry name" value="RuvA_C_sf"/>
</dbReference>
<dbReference type="NCBIfam" id="TIGR00084">
    <property type="entry name" value="ruvA"/>
    <property type="match status" value="1"/>
</dbReference>
<dbReference type="Pfam" id="PF14520">
    <property type="entry name" value="HHH_5"/>
    <property type="match status" value="1"/>
</dbReference>
<dbReference type="Pfam" id="PF07499">
    <property type="entry name" value="RuvA_C"/>
    <property type="match status" value="1"/>
</dbReference>
<dbReference type="Pfam" id="PF01330">
    <property type="entry name" value="RuvA_N"/>
    <property type="match status" value="1"/>
</dbReference>
<dbReference type="SMART" id="SM00278">
    <property type="entry name" value="HhH1"/>
    <property type="match status" value="2"/>
</dbReference>
<dbReference type="SUPFAM" id="SSF46929">
    <property type="entry name" value="DNA helicase RuvA subunit, C-terminal domain"/>
    <property type="match status" value="1"/>
</dbReference>
<dbReference type="SUPFAM" id="SSF50249">
    <property type="entry name" value="Nucleic acid-binding proteins"/>
    <property type="match status" value="1"/>
</dbReference>
<dbReference type="SUPFAM" id="SSF47781">
    <property type="entry name" value="RuvA domain 2-like"/>
    <property type="match status" value="1"/>
</dbReference>